<keyword id="KW-0711">Selenium</keyword>
<keyword id="KW-0808">Transferase</keyword>
<sequence>MRPDCTDFRQLFLDDVPMMDMRAPVEFAKGAFPGVVNLPLMNDQERQKVGTCYKQQGQAAAIALGHQLVSGTTKQARLEAWAAFAKAHPDGYLYCFRGGLRSQIVQGWLRDEAGIQYPRVKGGYKAMRTFLLETTQQAVEQCDFVLVGGLTGTGKTDVLHQLDNVLDLEGHANHRGSSFGKRATAQPAQIDFENQLAIDVLKKRARGIGQFVLEDEGRIVGSCTVPLELYQGMQHYPLVWLEDSFTNRVERILRDYVVNLSAEFKAVHGEEDGPRLFAERMLQSMANIYKRLGGERHQRLSEMLREALQEQQRSGAVDLHRGWIEGLLNEYYDPMYAYQRAAKAERIEFAGDAVEVREYLKARALREPRK</sequence>
<evidence type="ECO:0000255" key="1">
    <source>
        <dbReference type="HAMAP-Rule" id="MF_01622"/>
    </source>
</evidence>
<gene>
    <name evidence="1" type="primary">selU</name>
    <name type="ordered locus">Pput_0849</name>
</gene>
<name>SELU_PSEP1</name>
<comment type="function">
    <text evidence="1">Involved in the post-transcriptional modification of the uridine at the wobble position (U34) of tRNA(Lys), tRNA(Glu) and tRNA(Gln). Catalyzes the conversion of 2-thiouridine (S2U-RNA) to 2-selenouridine (Se2U-RNA). Acts in a two-step process involving geranylation of 2-thiouridine (S2U) to S-geranyl-2-thiouridine (geS2U) and subsequent selenation of the latter derivative to 2-selenouridine (Se2U) in the tRNA chain.</text>
</comment>
<comment type="catalytic activity">
    <reaction evidence="1">
        <text>5-methylaminomethyl-2-thiouridine(34) in tRNA + selenophosphate + (2E)-geranyl diphosphate + H2O + H(+) = 5-methylaminomethyl-2-selenouridine(34) in tRNA + (2E)-thiogeraniol + phosphate + diphosphate</text>
        <dbReference type="Rhea" id="RHEA:42716"/>
        <dbReference type="Rhea" id="RHEA-COMP:10195"/>
        <dbReference type="Rhea" id="RHEA-COMP:10196"/>
        <dbReference type="ChEBI" id="CHEBI:15377"/>
        <dbReference type="ChEBI" id="CHEBI:15378"/>
        <dbReference type="ChEBI" id="CHEBI:16144"/>
        <dbReference type="ChEBI" id="CHEBI:33019"/>
        <dbReference type="ChEBI" id="CHEBI:43474"/>
        <dbReference type="ChEBI" id="CHEBI:58057"/>
        <dbReference type="ChEBI" id="CHEBI:74455"/>
        <dbReference type="ChEBI" id="CHEBI:82743"/>
        <dbReference type="ChEBI" id="CHEBI:143703"/>
        <dbReference type="EC" id="2.9.1.3"/>
    </reaction>
    <physiologicalReaction direction="left-to-right" evidence="1">
        <dbReference type="Rhea" id="RHEA:42717"/>
    </physiologicalReaction>
</comment>
<comment type="catalytic activity">
    <reaction evidence="1">
        <text>5-methylaminomethyl-2-thiouridine(34) in tRNA + (2E)-geranyl diphosphate = 5-methylaminomethyl-S-(2E)-geranyl-thiouridine(34) in tRNA + diphosphate</text>
        <dbReference type="Rhea" id="RHEA:14085"/>
        <dbReference type="Rhea" id="RHEA-COMP:10195"/>
        <dbReference type="Rhea" id="RHEA-COMP:14654"/>
        <dbReference type="ChEBI" id="CHEBI:33019"/>
        <dbReference type="ChEBI" id="CHEBI:58057"/>
        <dbReference type="ChEBI" id="CHEBI:74455"/>
        <dbReference type="ChEBI" id="CHEBI:140632"/>
    </reaction>
    <physiologicalReaction direction="left-to-right" evidence="1">
        <dbReference type="Rhea" id="RHEA:14086"/>
    </physiologicalReaction>
</comment>
<comment type="catalytic activity">
    <reaction evidence="1">
        <text>5-methylaminomethyl-S-(2E)-geranyl-thiouridine(34) in tRNA + selenophosphate + H(+) = 5-methylaminomethyl-2-(Se-phospho)selenouridine(34) in tRNA + (2E)-thiogeraniol</text>
        <dbReference type="Rhea" id="RHEA:60172"/>
        <dbReference type="Rhea" id="RHEA-COMP:14654"/>
        <dbReference type="Rhea" id="RHEA-COMP:15523"/>
        <dbReference type="ChEBI" id="CHEBI:15378"/>
        <dbReference type="ChEBI" id="CHEBI:16144"/>
        <dbReference type="ChEBI" id="CHEBI:140632"/>
        <dbReference type="ChEBI" id="CHEBI:143702"/>
        <dbReference type="ChEBI" id="CHEBI:143703"/>
    </reaction>
    <physiologicalReaction direction="left-to-right" evidence="1">
        <dbReference type="Rhea" id="RHEA:60173"/>
    </physiologicalReaction>
</comment>
<comment type="catalytic activity">
    <reaction evidence="1">
        <text>5-methylaminomethyl-2-(Se-phospho)selenouridine(34) in tRNA + H2O = 5-methylaminomethyl-2-selenouridine(34) in tRNA + phosphate</text>
        <dbReference type="Rhea" id="RHEA:60176"/>
        <dbReference type="Rhea" id="RHEA-COMP:10196"/>
        <dbReference type="Rhea" id="RHEA-COMP:15523"/>
        <dbReference type="ChEBI" id="CHEBI:15377"/>
        <dbReference type="ChEBI" id="CHEBI:43474"/>
        <dbReference type="ChEBI" id="CHEBI:82743"/>
        <dbReference type="ChEBI" id="CHEBI:143702"/>
    </reaction>
    <physiologicalReaction direction="left-to-right" evidence="1">
        <dbReference type="Rhea" id="RHEA:60177"/>
    </physiologicalReaction>
</comment>
<comment type="subunit">
    <text evidence="1">Monomer.</text>
</comment>
<comment type="similarity">
    <text evidence="1">Belongs to the SelU family.</text>
</comment>
<protein>
    <recommendedName>
        <fullName evidence="1">tRNA 2-selenouridine synthase</fullName>
        <ecNumber evidence="1">2.9.1.3</ecNumber>
    </recommendedName>
</protein>
<proteinExistence type="inferred from homology"/>
<organism>
    <name type="scientific">Pseudomonas putida (strain ATCC 700007 / DSM 6899 / JCM 31910 / BCRC 17059 / LMG 24140 / F1)</name>
    <dbReference type="NCBI Taxonomy" id="351746"/>
    <lineage>
        <taxon>Bacteria</taxon>
        <taxon>Pseudomonadati</taxon>
        <taxon>Pseudomonadota</taxon>
        <taxon>Gammaproteobacteria</taxon>
        <taxon>Pseudomonadales</taxon>
        <taxon>Pseudomonadaceae</taxon>
        <taxon>Pseudomonas</taxon>
    </lineage>
</organism>
<feature type="chain" id="PRO_1000069591" description="tRNA 2-selenouridine synthase">
    <location>
        <begin position="1"/>
        <end position="370"/>
    </location>
</feature>
<feature type="domain" description="Rhodanese" evidence="1">
    <location>
        <begin position="12"/>
        <end position="136"/>
    </location>
</feature>
<feature type="active site" description="S-selanylcysteine intermediate" evidence="1">
    <location>
        <position position="95"/>
    </location>
</feature>
<accession>A5VYQ1</accession>
<reference key="1">
    <citation type="submission" date="2007-05" db="EMBL/GenBank/DDBJ databases">
        <title>Complete sequence of Pseudomonas putida F1.</title>
        <authorList>
            <consortium name="US DOE Joint Genome Institute"/>
            <person name="Copeland A."/>
            <person name="Lucas S."/>
            <person name="Lapidus A."/>
            <person name="Barry K."/>
            <person name="Detter J.C."/>
            <person name="Glavina del Rio T."/>
            <person name="Hammon N."/>
            <person name="Israni S."/>
            <person name="Dalin E."/>
            <person name="Tice H."/>
            <person name="Pitluck S."/>
            <person name="Chain P."/>
            <person name="Malfatti S."/>
            <person name="Shin M."/>
            <person name="Vergez L."/>
            <person name="Schmutz J."/>
            <person name="Larimer F."/>
            <person name="Land M."/>
            <person name="Hauser L."/>
            <person name="Kyrpides N."/>
            <person name="Lykidis A."/>
            <person name="Parales R."/>
            <person name="Richardson P."/>
        </authorList>
    </citation>
    <scope>NUCLEOTIDE SEQUENCE [LARGE SCALE GENOMIC DNA]</scope>
    <source>
        <strain>ATCC 700007 / DSM 6899 / JCM 31910 / BCRC 17059 / LMG 24140 / F1</strain>
    </source>
</reference>
<dbReference type="EC" id="2.9.1.3" evidence="1"/>
<dbReference type="EMBL" id="CP000712">
    <property type="protein sequence ID" value="ABQ77011.1"/>
    <property type="molecule type" value="Genomic_DNA"/>
</dbReference>
<dbReference type="SMR" id="A5VYQ1"/>
<dbReference type="KEGG" id="ppf:Pput_0849"/>
<dbReference type="eggNOG" id="COG2603">
    <property type="taxonomic scope" value="Bacteria"/>
</dbReference>
<dbReference type="HOGENOM" id="CLU_043456_1_0_6"/>
<dbReference type="GO" id="GO:0016765">
    <property type="term" value="F:transferase activity, transferring alkyl or aryl (other than methyl) groups"/>
    <property type="evidence" value="ECO:0007669"/>
    <property type="project" value="UniProtKB-UniRule"/>
</dbReference>
<dbReference type="GO" id="GO:0043828">
    <property type="term" value="F:tRNA 2-selenouridine synthase activity"/>
    <property type="evidence" value="ECO:0007669"/>
    <property type="project" value="UniProtKB-EC"/>
</dbReference>
<dbReference type="GO" id="GO:0002098">
    <property type="term" value="P:tRNA wobble uridine modification"/>
    <property type="evidence" value="ECO:0007669"/>
    <property type="project" value="UniProtKB-UniRule"/>
</dbReference>
<dbReference type="CDD" id="cd01520">
    <property type="entry name" value="RHOD_YbbB"/>
    <property type="match status" value="1"/>
</dbReference>
<dbReference type="Gene3D" id="3.40.250.10">
    <property type="entry name" value="Rhodanese-like domain"/>
    <property type="match status" value="1"/>
</dbReference>
<dbReference type="HAMAP" id="MF_01622">
    <property type="entry name" value="tRNA_sel_U_synth"/>
    <property type="match status" value="1"/>
</dbReference>
<dbReference type="InterPro" id="IPR001763">
    <property type="entry name" value="Rhodanese-like_dom"/>
</dbReference>
<dbReference type="InterPro" id="IPR036873">
    <property type="entry name" value="Rhodanese-like_dom_sf"/>
</dbReference>
<dbReference type="InterPro" id="IPR017582">
    <property type="entry name" value="SelU"/>
</dbReference>
<dbReference type="NCBIfam" id="NF008750">
    <property type="entry name" value="PRK11784.1-2"/>
    <property type="match status" value="1"/>
</dbReference>
<dbReference type="NCBIfam" id="NF008751">
    <property type="entry name" value="PRK11784.1-3"/>
    <property type="match status" value="1"/>
</dbReference>
<dbReference type="NCBIfam" id="TIGR03167">
    <property type="entry name" value="tRNA_sel_U_synt"/>
    <property type="match status" value="1"/>
</dbReference>
<dbReference type="PANTHER" id="PTHR30401">
    <property type="entry name" value="TRNA 2-SELENOURIDINE SYNTHASE"/>
    <property type="match status" value="1"/>
</dbReference>
<dbReference type="PANTHER" id="PTHR30401:SF0">
    <property type="entry name" value="TRNA 2-SELENOURIDINE SYNTHASE"/>
    <property type="match status" value="1"/>
</dbReference>
<dbReference type="SMART" id="SM00450">
    <property type="entry name" value="RHOD"/>
    <property type="match status" value="1"/>
</dbReference>
<dbReference type="SUPFAM" id="SSF52821">
    <property type="entry name" value="Rhodanese/Cell cycle control phosphatase"/>
    <property type="match status" value="1"/>
</dbReference>
<dbReference type="PROSITE" id="PS50206">
    <property type="entry name" value="RHODANESE_3"/>
    <property type="match status" value="1"/>
</dbReference>